<organism>
    <name type="scientific">Staphylococcus saprophyticus subsp. saprophyticus (strain ATCC 15305 / DSM 20229 / NCIMB 8711 / NCTC 7292 / S-41)</name>
    <dbReference type="NCBI Taxonomy" id="342451"/>
    <lineage>
        <taxon>Bacteria</taxon>
        <taxon>Bacillati</taxon>
        <taxon>Bacillota</taxon>
        <taxon>Bacilli</taxon>
        <taxon>Bacillales</taxon>
        <taxon>Staphylococcaceae</taxon>
        <taxon>Staphylococcus</taxon>
    </lineage>
</organism>
<dbReference type="EC" id="2.1.1.192" evidence="1"/>
<dbReference type="EMBL" id="AP008934">
    <property type="protein sequence ID" value="BAE18699.1"/>
    <property type="molecule type" value="Genomic_DNA"/>
</dbReference>
<dbReference type="RefSeq" id="WP_011303297.1">
    <property type="nucleotide sequence ID" value="NZ_MTGA01000034.1"/>
</dbReference>
<dbReference type="SMR" id="Q49WZ9"/>
<dbReference type="GeneID" id="3615200"/>
<dbReference type="KEGG" id="ssp:SSP1554"/>
<dbReference type="PATRIC" id="fig|342451.11.peg.1556"/>
<dbReference type="eggNOG" id="COG0820">
    <property type="taxonomic scope" value="Bacteria"/>
</dbReference>
<dbReference type="HOGENOM" id="CLU_029101_0_1_9"/>
<dbReference type="OrthoDB" id="9793973at2"/>
<dbReference type="Proteomes" id="UP000006371">
    <property type="component" value="Chromosome"/>
</dbReference>
<dbReference type="GO" id="GO:0005737">
    <property type="term" value="C:cytoplasm"/>
    <property type="evidence" value="ECO:0007669"/>
    <property type="project" value="UniProtKB-SubCell"/>
</dbReference>
<dbReference type="GO" id="GO:0051539">
    <property type="term" value="F:4 iron, 4 sulfur cluster binding"/>
    <property type="evidence" value="ECO:0007669"/>
    <property type="project" value="UniProtKB-UniRule"/>
</dbReference>
<dbReference type="GO" id="GO:0046872">
    <property type="term" value="F:metal ion binding"/>
    <property type="evidence" value="ECO:0007669"/>
    <property type="project" value="UniProtKB-KW"/>
</dbReference>
<dbReference type="GO" id="GO:0070040">
    <property type="term" value="F:rRNA (adenine(2503)-C2-)-methyltransferase activity"/>
    <property type="evidence" value="ECO:0007669"/>
    <property type="project" value="UniProtKB-UniRule"/>
</dbReference>
<dbReference type="GO" id="GO:0019843">
    <property type="term" value="F:rRNA binding"/>
    <property type="evidence" value="ECO:0007669"/>
    <property type="project" value="UniProtKB-UniRule"/>
</dbReference>
<dbReference type="GO" id="GO:0002935">
    <property type="term" value="F:tRNA (adenine(37)-C2)-methyltransferase activity"/>
    <property type="evidence" value="ECO:0007669"/>
    <property type="project" value="UniProtKB-UniRule"/>
</dbReference>
<dbReference type="GO" id="GO:0000049">
    <property type="term" value="F:tRNA binding"/>
    <property type="evidence" value="ECO:0007669"/>
    <property type="project" value="UniProtKB-UniRule"/>
</dbReference>
<dbReference type="GO" id="GO:0046677">
    <property type="term" value="P:response to antibiotic"/>
    <property type="evidence" value="ECO:0007669"/>
    <property type="project" value="UniProtKB-KW"/>
</dbReference>
<dbReference type="GO" id="GO:0070475">
    <property type="term" value="P:rRNA base methylation"/>
    <property type="evidence" value="ECO:0007669"/>
    <property type="project" value="UniProtKB-UniRule"/>
</dbReference>
<dbReference type="GO" id="GO:0030488">
    <property type="term" value="P:tRNA methylation"/>
    <property type="evidence" value="ECO:0007669"/>
    <property type="project" value="UniProtKB-UniRule"/>
</dbReference>
<dbReference type="CDD" id="cd01335">
    <property type="entry name" value="Radical_SAM"/>
    <property type="match status" value="1"/>
</dbReference>
<dbReference type="FunFam" id="3.20.20.70:FF:000014">
    <property type="entry name" value="Probable dual-specificity RNA methyltransferase RlmN"/>
    <property type="match status" value="1"/>
</dbReference>
<dbReference type="Gene3D" id="1.10.150.530">
    <property type="match status" value="1"/>
</dbReference>
<dbReference type="Gene3D" id="3.20.20.70">
    <property type="entry name" value="Aldolase class I"/>
    <property type="match status" value="1"/>
</dbReference>
<dbReference type="HAMAP" id="MF_01849">
    <property type="entry name" value="RNA_methyltr_RlmN"/>
    <property type="match status" value="1"/>
</dbReference>
<dbReference type="InterPro" id="IPR013785">
    <property type="entry name" value="Aldolase_TIM"/>
</dbReference>
<dbReference type="InterPro" id="IPR040072">
    <property type="entry name" value="Methyltransferase_A"/>
</dbReference>
<dbReference type="InterPro" id="IPR048641">
    <property type="entry name" value="RlmN_N"/>
</dbReference>
<dbReference type="InterPro" id="IPR027492">
    <property type="entry name" value="RNA_MTrfase_RlmN"/>
</dbReference>
<dbReference type="InterPro" id="IPR004383">
    <property type="entry name" value="rRNA_lsu_MTrfase_RlmN/Cfr"/>
</dbReference>
<dbReference type="InterPro" id="IPR007197">
    <property type="entry name" value="rSAM"/>
</dbReference>
<dbReference type="NCBIfam" id="TIGR00048">
    <property type="entry name" value="rRNA_mod_RlmN"/>
    <property type="match status" value="1"/>
</dbReference>
<dbReference type="PANTHER" id="PTHR30544">
    <property type="entry name" value="23S RRNA METHYLTRANSFERASE"/>
    <property type="match status" value="1"/>
</dbReference>
<dbReference type="PANTHER" id="PTHR30544:SF5">
    <property type="entry name" value="RADICAL SAM CORE DOMAIN-CONTAINING PROTEIN"/>
    <property type="match status" value="1"/>
</dbReference>
<dbReference type="Pfam" id="PF04055">
    <property type="entry name" value="Radical_SAM"/>
    <property type="match status" value="1"/>
</dbReference>
<dbReference type="Pfam" id="PF21016">
    <property type="entry name" value="RlmN_N"/>
    <property type="match status" value="1"/>
</dbReference>
<dbReference type="PIRSF" id="PIRSF006004">
    <property type="entry name" value="CHP00048"/>
    <property type="match status" value="1"/>
</dbReference>
<dbReference type="SFLD" id="SFLDF00275">
    <property type="entry name" value="adenosine_C2_methyltransferase"/>
    <property type="match status" value="1"/>
</dbReference>
<dbReference type="SFLD" id="SFLDG01062">
    <property type="entry name" value="methyltransferase_(Class_A)"/>
    <property type="match status" value="1"/>
</dbReference>
<dbReference type="SUPFAM" id="SSF102114">
    <property type="entry name" value="Radical SAM enzymes"/>
    <property type="match status" value="1"/>
</dbReference>
<dbReference type="PROSITE" id="PS51918">
    <property type="entry name" value="RADICAL_SAM"/>
    <property type="match status" value="1"/>
</dbReference>
<accession>Q49WZ9</accession>
<evidence type="ECO:0000255" key="1">
    <source>
        <dbReference type="HAMAP-Rule" id="MF_01849"/>
    </source>
</evidence>
<evidence type="ECO:0000255" key="2">
    <source>
        <dbReference type="PROSITE-ProRule" id="PRU01266"/>
    </source>
</evidence>
<proteinExistence type="inferred from homology"/>
<feature type="chain" id="PRO_0000350444" description="Probable dual-specificity RNA methyltransferase RlmN">
    <location>
        <begin position="1"/>
        <end position="364"/>
    </location>
</feature>
<feature type="domain" description="Radical SAM core" evidence="2">
    <location>
        <begin position="113"/>
        <end position="346"/>
    </location>
</feature>
<feature type="active site" description="Proton acceptor" evidence="1">
    <location>
        <position position="107"/>
    </location>
</feature>
<feature type="active site" description="S-methylcysteine intermediate" evidence="1">
    <location>
        <position position="351"/>
    </location>
</feature>
<feature type="binding site" evidence="1">
    <location>
        <position position="127"/>
    </location>
    <ligand>
        <name>[4Fe-4S] cluster</name>
        <dbReference type="ChEBI" id="CHEBI:49883"/>
        <note>4Fe-4S-S-AdoMet</note>
    </ligand>
</feature>
<feature type="binding site" evidence="1">
    <location>
        <position position="131"/>
    </location>
    <ligand>
        <name>[4Fe-4S] cluster</name>
        <dbReference type="ChEBI" id="CHEBI:49883"/>
        <note>4Fe-4S-S-AdoMet</note>
    </ligand>
</feature>
<feature type="binding site" evidence="1">
    <location>
        <position position="134"/>
    </location>
    <ligand>
        <name>[4Fe-4S] cluster</name>
        <dbReference type="ChEBI" id="CHEBI:49883"/>
        <note>4Fe-4S-S-AdoMet</note>
    </ligand>
</feature>
<feature type="binding site" evidence="1">
    <location>
        <begin position="177"/>
        <end position="178"/>
    </location>
    <ligand>
        <name>S-adenosyl-L-methionine</name>
        <dbReference type="ChEBI" id="CHEBI:59789"/>
    </ligand>
</feature>
<feature type="binding site" evidence="1">
    <location>
        <position position="209"/>
    </location>
    <ligand>
        <name>S-adenosyl-L-methionine</name>
        <dbReference type="ChEBI" id="CHEBI:59789"/>
    </ligand>
</feature>
<feature type="binding site" evidence="1">
    <location>
        <begin position="232"/>
        <end position="234"/>
    </location>
    <ligand>
        <name>S-adenosyl-L-methionine</name>
        <dbReference type="ChEBI" id="CHEBI:59789"/>
    </ligand>
</feature>
<feature type="binding site" evidence="1">
    <location>
        <position position="308"/>
    </location>
    <ligand>
        <name>S-adenosyl-L-methionine</name>
        <dbReference type="ChEBI" id="CHEBI:59789"/>
    </ligand>
</feature>
<feature type="disulfide bond" description="(transient)" evidence="1">
    <location>
        <begin position="120"/>
        <end position="351"/>
    </location>
</feature>
<reference key="1">
    <citation type="journal article" date="2005" name="Proc. Natl. Acad. Sci. U.S.A.">
        <title>Whole genome sequence of Staphylococcus saprophyticus reveals the pathogenesis of uncomplicated urinary tract infection.</title>
        <authorList>
            <person name="Kuroda M."/>
            <person name="Yamashita A."/>
            <person name="Hirakawa H."/>
            <person name="Kumano M."/>
            <person name="Morikawa K."/>
            <person name="Higashide M."/>
            <person name="Maruyama A."/>
            <person name="Inose Y."/>
            <person name="Matoba K."/>
            <person name="Toh H."/>
            <person name="Kuhara S."/>
            <person name="Hattori M."/>
            <person name="Ohta T."/>
        </authorList>
    </citation>
    <scope>NUCLEOTIDE SEQUENCE [LARGE SCALE GENOMIC DNA]</scope>
    <source>
        <strain>ATCC 15305 / DSM 20229 / NCIMB 8711 / NCTC 7292 / S-41</strain>
    </source>
</reference>
<gene>
    <name evidence="1" type="primary">rlmN</name>
    <name type="ordered locus">SSP1554</name>
</gene>
<comment type="function">
    <text evidence="1">Specifically methylates position 2 of adenine 2503 in 23S rRNA and position 2 of adenine 37 in tRNAs. Confers resistance to some classes of antibiotics.</text>
</comment>
<comment type="catalytic activity">
    <reaction evidence="1">
        <text>adenosine(2503) in 23S rRNA + 2 reduced [2Fe-2S]-[ferredoxin] + 2 S-adenosyl-L-methionine = 2-methyladenosine(2503) in 23S rRNA + 5'-deoxyadenosine + L-methionine + 2 oxidized [2Fe-2S]-[ferredoxin] + S-adenosyl-L-homocysteine</text>
        <dbReference type="Rhea" id="RHEA:42916"/>
        <dbReference type="Rhea" id="RHEA-COMP:10000"/>
        <dbReference type="Rhea" id="RHEA-COMP:10001"/>
        <dbReference type="Rhea" id="RHEA-COMP:10152"/>
        <dbReference type="Rhea" id="RHEA-COMP:10282"/>
        <dbReference type="ChEBI" id="CHEBI:17319"/>
        <dbReference type="ChEBI" id="CHEBI:33737"/>
        <dbReference type="ChEBI" id="CHEBI:33738"/>
        <dbReference type="ChEBI" id="CHEBI:57844"/>
        <dbReference type="ChEBI" id="CHEBI:57856"/>
        <dbReference type="ChEBI" id="CHEBI:59789"/>
        <dbReference type="ChEBI" id="CHEBI:74411"/>
        <dbReference type="ChEBI" id="CHEBI:74497"/>
        <dbReference type="EC" id="2.1.1.192"/>
    </reaction>
</comment>
<comment type="catalytic activity">
    <reaction evidence="1">
        <text>adenosine(37) in tRNA + 2 reduced [2Fe-2S]-[ferredoxin] + 2 S-adenosyl-L-methionine = 2-methyladenosine(37) in tRNA + 5'-deoxyadenosine + L-methionine + 2 oxidized [2Fe-2S]-[ferredoxin] + S-adenosyl-L-homocysteine</text>
        <dbReference type="Rhea" id="RHEA:43332"/>
        <dbReference type="Rhea" id="RHEA-COMP:10000"/>
        <dbReference type="Rhea" id="RHEA-COMP:10001"/>
        <dbReference type="Rhea" id="RHEA-COMP:10162"/>
        <dbReference type="Rhea" id="RHEA-COMP:10485"/>
        <dbReference type="ChEBI" id="CHEBI:17319"/>
        <dbReference type="ChEBI" id="CHEBI:33737"/>
        <dbReference type="ChEBI" id="CHEBI:33738"/>
        <dbReference type="ChEBI" id="CHEBI:57844"/>
        <dbReference type="ChEBI" id="CHEBI:57856"/>
        <dbReference type="ChEBI" id="CHEBI:59789"/>
        <dbReference type="ChEBI" id="CHEBI:74411"/>
        <dbReference type="ChEBI" id="CHEBI:74497"/>
        <dbReference type="EC" id="2.1.1.192"/>
    </reaction>
</comment>
<comment type="cofactor">
    <cofactor evidence="1">
        <name>[4Fe-4S] cluster</name>
        <dbReference type="ChEBI" id="CHEBI:49883"/>
    </cofactor>
    <text evidence="1">Binds 1 [4Fe-4S] cluster. The cluster is coordinated with 3 cysteines and an exchangeable S-adenosyl-L-methionine.</text>
</comment>
<comment type="subcellular location">
    <subcellularLocation>
        <location evidence="1">Cytoplasm</location>
    </subcellularLocation>
</comment>
<comment type="miscellaneous">
    <text evidence="1">Reaction proceeds by a ping-pong mechanism involving intermediate methylation of a conserved cysteine residue.</text>
</comment>
<comment type="similarity">
    <text evidence="1">Belongs to the radical SAM superfamily. RlmN family.</text>
</comment>
<sequence>MITAEKKKKNKFLPNFEKQSIYSLRYDEMQDWLVQNGQQKFRAKQIFEWLYEKRVDDIDDMTNLSKELREVLKDNFTMTTMTTVVKQESKDGTIKFLFELQDGYTIETVLMRHEYGNSVCVTTQVGCRIGCTFCASTLGGLKRNLEAGEIVSQVLTVQKALDETEERVSQIVIMGIGEPFENYDEMMDFLKIVNDDNGLNIGARHITVSTSGIIPRIYDFADEDIQINFAVSLHGANDEIRSRLMPINRAYNVEKLMEAIHYYQEKTNRRITFEYGLFGGVNDQIEHARELAHLIQELNCHVNLIPVNHVPERNYVKTPKEDIFKFEKELKRLGINATIRREQGADIDAACGQLRAKERKVETR</sequence>
<protein>
    <recommendedName>
        <fullName evidence="1">Probable dual-specificity RNA methyltransferase RlmN</fullName>
        <ecNumber evidence="1">2.1.1.192</ecNumber>
    </recommendedName>
    <alternativeName>
        <fullName evidence="1">23S rRNA (adenine(2503)-C(2))-methyltransferase</fullName>
    </alternativeName>
    <alternativeName>
        <fullName evidence="1">23S rRNA m2A2503 methyltransferase</fullName>
    </alternativeName>
    <alternativeName>
        <fullName evidence="1">Ribosomal RNA large subunit methyltransferase N</fullName>
    </alternativeName>
    <alternativeName>
        <fullName evidence="1">tRNA (adenine(37)-C(2))-methyltransferase</fullName>
    </alternativeName>
    <alternativeName>
        <fullName evidence="1">tRNA m2A37 methyltransferase</fullName>
    </alternativeName>
</protein>
<keyword id="KW-0004">4Fe-4S</keyword>
<keyword id="KW-0046">Antibiotic resistance</keyword>
<keyword id="KW-0963">Cytoplasm</keyword>
<keyword id="KW-1015">Disulfide bond</keyword>
<keyword id="KW-0408">Iron</keyword>
<keyword id="KW-0411">Iron-sulfur</keyword>
<keyword id="KW-0479">Metal-binding</keyword>
<keyword id="KW-0489">Methyltransferase</keyword>
<keyword id="KW-1185">Reference proteome</keyword>
<keyword id="KW-0698">rRNA processing</keyword>
<keyword id="KW-0949">S-adenosyl-L-methionine</keyword>
<keyword id="KW-0808">Transferase</keyword>
<keyword id="KW-0819">tRNA processing</keyword>
<name>RLMN_STAS1</name>